<feature type="chain" id="PRO_0000279585" description="28S rRNA (cytosine-C(5))-methyltransferase">
    <location>
        <begin position="1"/>
        <end position="793"/>
    </location>
</feature>
<feature type="region of interest" description="N-terminal domain" evidence="1">
    <location>
        <begin position="1"/>
        <end position="355"/>
    </location>
</feature>
<feature type="region of interest" description="Disordered" evidence="3">
    <location>
        <begin position="1"/>
        <end position="194"/>
    </location>
</feature>
<feature type="region of interest" description="Interaction with NPM1" evidence="1">
    <location>
        <begin position="25"/>
        <end position="57"/>
    </location>
</feature>
<feature type="region of interest" description="Catalytic domain" evidence="1">
    <location>
        <begin position="356"/>
        <end position="579"/>
    </location>
</feature>
<feature type="region of interest" description="Disordered" evidence="3">
    <location>
        <begin position="576"/>
        <end position="793"/>
    </location>
</feature>
<feature type="region of interest" description="C-terminal domain" evidence="1">
    <location>
        <begin position="580"/>
        <end position="793"/>
    </location>
</feature>
<feature type="short sequence motif" description="Nucleolar localization signal" evidence="1">
    <location>
        <begin position="41"/>
        <end position="58"/>
    </location>
</feature>
<feature type="compositionally biased region" description="Basic residues" evidence="3">
    <location>
        <begin position="10"/>
        <end position="22"/>
    </location>
</feature>
<feature type="compositionally biased region" description="Basic residues" evidence="3">
    <location>
        <begin position="44"/>
        <end position="57"/>
    </location>
</feature>
<feature type="compositionally biased region" description="Acidic residues" evidence="3">
    <location>
        <begin position="98"/>
        <end position="110"/>
    </location>
</feature>
<feature type="compositionally biased region" description="Acidic residues" evidence="3">
    <location>
        <begin position="118"/>
        <end position="128"/>
    </location>
</feature>
<feature type="compositionally biased region" description="Acidic residues" evidence="3">
    <location>
        <begin position="165"/>
        <end position="178"/>
    </location>
</feature>
<feature type="compositionally biased region" description="Basic and acidic residues" evidence="3">
    <location>
        <begin position="182"/>
        <end position="192"/>
    </location>
</feature>
<feature type="compositionally biased region" description="Polar residues" evidence="3">
    <location>
        <begin position="599"/>
        <end position="609"/>
    </location>
</feature>
<feature type="compositionally biased region" description="Polar residues" evidence="3">
    <location>
        <begin position="654"/>
        <end position="668"/>
    </location>
</feature>
<feature type="compositionally biased region" description="Basic residues" evidence="3">
    <location>
        <begin position="671"/>
        <end position="686"/>
    </location>
</feature>
<feature type="compositionally biased region" description="Polar residues" evidence="3">
    <location>
        <begin position="784"/>
        <end position="793"/>
    </location>
</feature>
<feature type="active site" description="Nucleophile" evidence="2">
    <location>
        <position position="502"/>
    </location>
</feature>
<feature type="binding site" evidence="2">
    <location>
        <begin position="377"/>
        <end position="383"/>
    </location>
    <ligand>
        <name>S-adenosyl-L-methionine</name>
        <dbReference type="ChEBI" id="CHEBI:59789"/>
    </ligand>
</feature>
<feature type="binding site" evidence="2">
    <location>
        <position position="401"/>
    </location>
    <ligand>
        <name>S-adenosyl-L-methionine</name>
        <dbReference type="ChEBI" id="CHEBI:59789"/>
    </ligand>
</feature>
<feature type="binding site" evidence="2">
    <location>
        <position position="428"/>
    </location>
    <ligand>
        <name>S-adenosyl-L-methionine</name>
        <dbReference type="ChEBI" id="CHEBI:59789"/>
    </ligand>
</feature>
<feature type="binding site" evidence="2">
    <location>
        <position position="445"/>
    </location>
    <ligand>
        <name>S-adenosyl-L-methionine</name>
        <dbReference type="ChEBI" id="CHEBI:59789"/>
    </ligand>
</feature>
<feature type="modified residue" description="Phosphoserine" evidence="1">
    <location>
        <position position="59"/>
    </location>
</feature>
<feature type="modified residue" description="Phosphoserine" evidence="1">
    <location>
        <position position="68"/>
    </location>
</feature>
<feature type="modified residue" description="Citrulline" evidence="4">
    <location>
        <position position="86"/>
    </location>
</feature>
<feature type="modified residue" description="Citrulline" evidence="4">
    <location>
        <position position="148"/>
    </location>
</feature>
<feature type="modified residue" description="Phosphothreonine" evidence="6">
    <location>
        <position position="169"/>
    </location>
</feature>
<feature type="modified residue" description="Phosphoserine" evidence="6">
    <location>
        <position position="179"/>
    </location>
</feature>
<feature type="modified residue" description="N6-acetyllysine" evidence="1">
    <location>
        <position position="634"/>
    </location>
</feature>
<feature type="modified residue" description="Phosphoserine" evidence="1">
    <location>
        <position position="649"/>
    </location>
</feature>
<feature type="modified residue" description="Phosphoserine" evidence="1">
    <location>
        <position position="713"/>
    </location>
</feature>
<feature type="modified residue" description="Phosphoserine" evidence="1">
    <location>
        <position position="767"/>
    </location>
</feature>
<feature type="modified residue" description="Phosphoserine" evidence="1">
    <location>
        <position position="782"/>
    </location>
</feature>
<feature type="modified residue" description="Phosphoserine" evidence="1">
    <location>
        <position position="793"/>
    </location>
</feature>
<feature type="cross-link" description="Glycyl lysine isopeptide (Lys-Gly) (interchain with G-Cter in SUMO2)" evidence="1">
    <location>
        <position position="72"/>
    </location>
</feature>
<feature type="cross-link" description="Glycyl lysine isopeptide (Lys-Gly) (interchain with G-Cter in SUMO2)" evidence="1">
    <location>
        <position position="257"/>
    </location>
</feature>
<feature type="cross-link" description="Glycyl lysine isopeptide (Lys-Gly) (interchain with G-Cter in SUMO2)" evidence="1">
    <location>
        <position position="601"/>
    </location>
</feature>
<feature type="sequence conflict" description="In Ref. 3; BAE32311." evidence="5" ref="3">
    <original>A</original>
    <variation>T</variation>
    <location>
        <position position="160"/>
    </location>
</feature>
<feature type="sequence conflict" description="In Ref. 3; BAE32311." evidence="5" ref="3">
    <original>L</original>
    <variation>A</variation>
    <location>
        <position position="312"/>
    </location>
</feature>
<feature type="sequence conflict" description="In Ref. 3; BAE32311." evidence="5" ref="3">
    <original>P</original>
    <variation>PP</variation>
    <location>
        <position position="708"/>
    </location>
</feature>
<reference key="1">
    <citation type="journal article" date="1992" name="Cancer Res.">
        <title>A region of antisense RNA from human p120 cDNA with high homology to mouse p120 cDNA inhibits NIH 3T3 proliferation.</title>
        <authorList>
            <person name="Valdez B.C."/>
            <person name="Perlaky L."/>
            <person name="Saijo Y."/>
            <person name="Henning D."/>
            <person name="Zhu C."/>
            <person name="Busch R.K."/>
            <person name="Zhang W.W."/>
            <person name="Busch H."/>
        </authorList>
    </citation>
    <scope>NUCLEOTIDE SEQUENCE [MRNA]</scope>
</reference>
<reference key="2">
    <citation type="journal article" date="2004" name="Genome Res.">
        <title>The status, quality, and expansion of the NIH full-length cDNA project: the Mammalian Gene Collection (MGC).</title>
        <authorList>
            <consortium name="The MGC Project Team"/>
        </authorList>
    </citation>
    <scope>NUCLEOTIDE SEQUENCE [LARGE SCALE MRNA]</scope>
    <source>
        <strain>Czech II</strain>
        <tissue>Mammary tumor</tissue>
    </source>
</reference>
<reference key="3">
    <citation type="journal article" date="2005" name="Science">
        <title>The transcriptional landscape of the mammalian genome.</title>
        <authorList>
            <person name="Carninci P."/>
            <person name="Kasukawa T."/>
            <person name="Katayama S."/>
            <person name="Gough J."/>
            <person name="Frith M.C."/>
            <person name="Maeda N."/>
            <person name="Oyama R."/>
            <person name="Ravasi T."/>
            <person name="Lenhard B."/>
            <person name="Wells C."/>
            <person name="Kodzius R."/>
            <person name="Shimokawa K."/>
            <person name="Bajic V.B."/>
            <person name="Brenner S.E."/>
            <person name="Batalov S."/>
            <person name="Forrest A.R."/>
            <person name="Zavolan M."/>
            <person name="Davis M.J."/>
            <person name="Wilming L.G."/>
            <person name="Aidinis V."/>
            <person name="Allen J.E."/>
            <person name="Ambesi-Impiombato A."/>
            <person name="Apweiler R."/>
            <person name="Aturaliya R.N."/>
            <person name="Bailey T.L."/>
            <person name="Bansal M."/>
            <person name="Baxter L."/>
            <person name="Beisel K.W."/>
            <person name="Bersano T."/>
            <person name="Bono H."/>
            <person name="Chalk A.M."/>
            <person name="Chiu K.P."/>
            <person name="Choudhary V."/>
            <person name="Christoffels A."/>
            <person name="Clutterbuck D.R."/>
            <person name="Crowe M.L."/>
            <person name="Dalla E."/>
            <person name="Dalrymple B.P."/>
            <person name="de Bono B."/>
            <person name="Della Gatta G."/>
            <person name="di Bernardo D."/>
            <person name="Down T."/>
            <person name="Engstrom P."/>
            <person name="Fagiolini M."/>
            <person name="Faulkner G."/>
            <person name="Fletcher C.F."/>
            <person name="Fukushima T."/>
            <person name="Furuno M."/>
            <person name="Futaki S."/>
            <person name="Gariboldi M."/>
            <person name="Georgii-Hemming P."/>
            <person name="Gingeras T.R."/>
            <person name="Gojobori T."/>
            <person name="Green R.E."/>
            <person name="Gustincich S."/>
            <person name="Harbers M."/>
            <person name="Hayashi Y."/>
            <person name="Hensch T.K."/>
            <person name="Hirokawa N."/>
            <person name="Hill D."/>
            <person name="Huminiecki L."/>
            <person name="Iacono M."/>
            <person name="Ikeo K."/>
            <person name="Iwama A."/>
            <person name="Ishikawa T."/>
            <person name="Jakt M."/>
            <person name="Kanapin A."/>
            <person name="Katoh M."/>
            <person name="Kawasawa Y."/>
            <person name="Kelso J."/>
            <person name="Kitamura H."/>
            <person name="Kitano H."/>
            <person name="Kollias G."/>
            <person name="Krishnan S.P."/>
            <person name="Kruger A."/>
            <person name="Kummerfeld S.K."/>
            <person name="Kurochkin I.V."/>
            <person name="Lareau L.F."/>
            <person name="Lazarevic D."/>
            <person name="Lipovich L."/>
            <person name="Liu J."/>
            <person name="Liuni S."/>
            <person name="McWilliam S."/>
            <person name="Madan Babu M."/>
            <person name="Madera M."/>
            <person name="Marchionni L."/>
            <person name="Matsuda H."/>
            <person name="Matsuzawa S."/>
            <person name="Miki H."/>
            <person name="Mignone F."/>
            <person name="Miyake S."/>
            <person name="Morris K."/>
            <person name="Mottagui-Tabar S."/>
            <person name="Mulder N."/>
            <person name="Nakano N."/>
            <person name="Nakauchi H."/>
            <person name="Ng P."/>
            <person name="Nilsson R."/>
            <person name="Nishiguchi S."/>
            <person name="Nishikawa S."/>
            <person name="Nori F."/>
            <person name="Ohara O."/>
            <person name="Okazaki Y."/>
            <person name="Orlando V."/>
            <person name="Pang K.C."/>
            <person name="Pavan W.J."/>
            <person name="Pavesi G."/>
            <person name="Pesole G."/>
            <person name="Petrovsky N."/>
            <person name="Piazza S."/>
            <person name="Reed J."/>
            <person name="Reid J.F."/>
            <person name="Ring B.Z."/>
            <person name="Ringwald M."/>
            <person name="Rost B."/>
            <person name="Ruan Y."/>
            <person name="Salzberg S.L."/>
            <person name="Sandelin A."/>
            <person name="Schneider C."/>
            <person name="Schoenbach C."/>
            <person name="Sekiguchi K."/>
            <person name="Semple C.A."/>
            <person name="Seno S."/>
            <person name="Sessa L."/>
            <person name="Sheng Y."/>
            <person name="Shibata Y."/>
            <person name="Shimada H."/>
            <person name="Shimada K."/>
            <person name="Silva D."/>
            <person name="Sinclair B."/>
            <person name="Sperling S."/>
            <person name="Stupka E."/>
            <person name="Sugiura K."/>
            <person name="Sultana R."/>
            <person name="Takenaka Y."/>
            <person name="Taki K."/>
            <person name="Tammoja K."/>
            <person name="Tan S.L."/>
            <person name="Tang S."/>
            <person name="Taylor M.S."/>
            <person name="Tegner J."/>
            <person name="Teichmann S.A."/>
            <person name="Ueda H.R."/>
            <person name="van Nimwegen E."/>
            <person name="Verardo R."/>
            <person name="Wei C.L."/>
            <person name="Yagi K."/>
            <person name="Yamanishi H."/>
            <person name="Zabarovsky E."/>
            <person name="Zhu S."/>
            <person name="Zimmer A."/>
            <person name="Hide W."/>
            <person name="Bult C."/>
            <person name="Grimmond S.M."/>
            <person name="Teasdale R.D."/>
            <person name="Liu E.T."/>
            <person name="Brusic V."/>
            <person name="Quackenbush J."/>
            <person name="Wahlestedt C."/>
            <person name="Mattick J.S."/>
            <person name="Hume D.A."/>
            <person name="Kai C."/>
            <person name="Sasaki D."/>
            <person name="Tomaru Y."/>
            <person name="Fukuda S."/>
            <person name="Kanamori-Katayama M."/>
            <person name="Suzuki M."/>
            <person name="Aoki J."/>
            <person name="Arakawa T."/>
            <person name="Iida J."/>
            <person name="Imamura K."/>
            <person name="Itoh M."/>
            <person name="Kato T."/>
            <person name="Kawaji H."/>
            <person name="Kawagashira N."/>
            <person name="Kawashima T."/>
            <person name="Kojima M."/>
            <person name="Kondo S."/>
            <person name="Konno H."/>
            <person name="Nakano K."/>
            <person name="Ninomiya N."/>
            <person name="Nishio T."/>
            <person name="Okada M."/>
            <person name="Plessy C."/>
            <person name="Shibata K."/>
            <person name="Shiraki T."/>
            <person name="Suzuki S."/>
            <person name="Tagami M."/>
            <person name="Waki K."/>
            <person name="Watahiki A."/>
            <person name="Okamura-Oho Y."/>
            <person name="Suzuki H."/>
            <person name="Kawai J."/>
            <person name="Hayashizaki Y."/>
        </authorList>
    </citation>
    <scope>NUCLEOTIDE SEQUENCE [LARGE SCALE MRNA] OF 1-731</scope>
    <source>
        <strain>NOD</strain>
        <tissue>Thymus</tissue>
    </source>
</reference>
<reference key="4">
    <citation type="journal article" date="2010" name="Cell">
        <title>A tissue-specific atlas of mouse protein phosphorylation and expression.</title>
        <authorList>
            <person name="Huttlin E.L."/>
            <person name="Jedrychowski M.P."/>
            <person name="Elias J.E."/>
            <person name="Goswami T."/>
            <person name="Rad R."/>
            <person name="Beausoleil S.A."/>
            <person name="Villen J."/>
            <person name="Haas W."/>
            <person name="Sowa M.E."/>
            <person name="Gygi S.P."/>
        </authorList>
    </citation>
    <scope>PHOSPHORYLATION [LARGE SCALE ANALYSIS] AT THR-169 AND SER-179</scope>
    <scope>IDENTIFICATION BY MASS SPECTROMETRY [LARGE SCALE ANALYSIS]</scope>
    <source>
        <tissue>Kidney</tissue>
        <tissue>Lung</tissue>
        <tissue>Pancreas</tissue>
        <tissue>Spleen</tissue>
        <tissue>Testis</tissue>
    </source>
</reference>
<reference key="5">
    <citation type="journal article" date="2014" name="Nature">
        <title>Citrullination regulates pluripotency and histone H1 binding to chromatin.</title>
        <authorList>
            <person name="Christophorou M.A."/>
            <person name="Castelo-Branco G."/>
            <person name="Halley-Stott R.P."/>
            <person name="Oliveira C.S."/>
            <person name="Loos R."/>
            <person name="Radzisheuskaya A."/>
            <person name="Mowen K.A."/>
            <person name="Bertone P."/>
            <person name="Silva J.C."/>
            <person name="Zernicka-Goetz M."/>
            <person name="Nielsen M.L."/>
            <person name="Gurdon J.B."/>
            <person name="Kouzarides T."/>
        </authorList>
    </citation>
    <scope>CITRULLINATION AT ARG-86 AND ARG-148</scope>
</reference>
<keyword id="KW-0007">Acetylation</keyword>
<keyword id="KW-0164">Citrullination</keyword>
<keyword id="KW-1017">Isopeptide bond</keyword>
<keyword id="KW-0489">Methyltransferase</keyword>
<keyword id="KW-0539">Nucleus</keyword>
<keyword id="KW-0597">Phosphoprotein</keyword>
<keyword id="KW-1185">Reference proteome</keyword>
<keyword id="KW-0690">Ribosome biogenesis</keyword>
<keyword id="KW-0694">RNA-binding</keyword>
<keyword id="KW-0698">rRNA processing</keyword>
<keyword id="KW-0949">S-adenosyl-L-methionine</keyword>
<keyword id="KW-0808">Transferase</keyword>
<keyword id="KW-0832">Ubl conjugation</keyword>
<gene>
    <name type="primary">Nop2</name>
    <name type="synonym">Nol1</name>
</gene>
<comment type="function">
    <text evidence="1">S-adenosyl-L-methionine-dependent methyltransferase that specifically methylates the C(5) position of cytosine 4447 in 28S rRNA. Required for efficient rRNA processing and 60S ribosomal subunit biogenesis. Regulates pre-rRNA processing through non-catalytic complex formation with box C/D snoRNAs and facilitates the recruitment of U3 and U8 snoRNAs to pre-90S ribosomal particles and their stable assembly into snoRNP complexes. May play a role in the regulation of the cell cycle and the increased nucleolar activity that is associated with the cell proliferation.</text>
</comment>
<comment type="catalytic activity">
    <reaction evidence="1">
        <text>a cytidine in 28S rRNA + S-adenosyl-L-methionine = a 5-methylcytidine in 28S rRNA + S-adenosyl-L-homocysteine + H(+)</text>
        <dbReference type="Rhea" id="RHEA:47788"/>
        <dbReference type="Rhea" id="RHEA-COMP:11915"/>
        <dbReference type="Rhea" id="RHEA-COMP:11916"/>
        <dbReference type="ChEBI" id="CHEBI:15378"/>
        <dbReference type="ChEBI" id="CHEBI:57856"/>
        <dbReference type="ChEBI" id="CHEBI:59789"/>
        <dbReference type="ChEBI" id="CHEBI:74483"/>
        <dbReference type="ChEBI" id="CHEBI:82748"/>
    </reaction>
</comment>
<comment type="subunit">
    <text evidence="1">Interacts with MCRS1. Interacts with WDR46. Interacts with RRP1B. Interacts with NPM1, NOP56, FBL, RUVBL1 and NUFIP1.</text>
</comment>
<comment type="subcellular location">
    <subcellularLocation>
        <location evidence="1">Nucleus</location>
        <location evidence="1">Nucleolus</location>
    </subcellularLocation>
    <subcellularLocation>
        <location evidence="1">Nucleus</location>
    </subcellularLocation>
    <text evidence="1">Localizes predominantly in the nucleolus and to a smaller extent in the nucleus.</text>
</comment>
<comment type="PTM">
    <text evidence="4">Citrullinated by PADI4.</text>
</comment>
<comment type="similarity">
    <text evidence="2">Belongs to the class I-like SAM-binding methyltransferase superfamily. RsmB/NOP family.</text>
</comment>
<protein>
    <recommendedName>
        <fullName>28S rRNA (cytosine-C(5))-methyltransferase</fullName>
        <ecNumber>2.1.1.-</ecNumber>
    </recommendedName>
    <alternativeName>
        <fullName>Nucleolar protein 1</fullName>
    </alternativeName>
    <alternativeName>
        <fullName>Nucleolar protein 2 homolog</fullName>
    </alternativeName>
    <alternativeName>
        <fullName>Proliferating-cell nucleolar antigen p120</fullName>
    </alternativeName>
    <alternativeName>
        <fullName>Proliferation-associated nucleolar protein p120</fullName>
    </alternativeName>
</protein>
<dbReference type="EC" id="2.1.1.-"/>
<dbReference type="EMBL" id="BC007151">
    <property type="protein sequence ID" value="AAH07151.1"/>
    <property type="molecule type" value="mRNA"/>
</dbReference>
<dbReference type="EMBL" id="AK154006">
    <property type="protein sequence ID" value="BAE32311.1"/>
    <property type="molecule type" value="mRNA"/>
</dbReference>
<dbReference type="PIR" id="A48998">
    <property type="entry name" value="A48998"/>
</dbReference>
<dbReference type="SMR" id="Q922K7"/>
<dbReference type="CORUM" id="Q922K7"/>
<dbReference type="FunCoup" id="Q922K7">
    <property type="interactions" value="1803"/>
</dbReference>
<dbReference type="IntAct" id="Q922K7">
    <property type="interactions" value="2"/>
</dbReference>
<dbReference type="MINT" id="Q922K7"/>
<dbReference type="STRING" id="10090.ENSMUSP00000047123"/>
<dbReference type="GlyGen" id="Q922K7">
    <property type="glycosylation" value="3 sites, 1 O-linked glycan (1 site)"/>
</dbReference>
<dbReference type="iPTMnet" id="Q922K7"/>
<dbReference type="PhosphoSitePlus" id="Q922K7"/>
<dbReference type="SwissPalm" id="Q922K7"/>
<dbReference type="jPOST" id="Q922K7"/>
<dbReference type="PaxDb" id="10090-ENSMUSP00000047123"/>
<dbReference type="PeptideAtlas" id="Q922K7"/>
<dbReference type="ProteomicsDB" id="293941"/>
<dbReference type="Pumba" id="Q922K7"/>
<dbReference type="AGR" id="MGI:107891"/>
<dbReference type="MGI" id="MGI:107891">
    <property type="gene designation" value="Nop2"/>
</dbReference>
<dbReference type="eggNOG" id="KOG1122">
    <property type="taxonomic scope" value="Eukaryota"/>
</dbReference>
<dbReference type="InParanoid" id="Q922K7"/>
<dbReference type="PhylomeDB" id="Q922K7"/>
<dbReference type="ChiTaRS" id="Nop2">
    <property type="organism name" value="mouse"/>
</dbReference>
<dbReference type="PRO" id="PR:Q922K7"/>
<dbReference type="Proteomes" id="UP000000589">
    <property type="component" value="Unplaced"/>
</dbReference>
<dbReference type="RNAct" id="Q922K7">
    <property type="molecule type" value="protein"/>
</dbReference>
<dbReference type="GO" id="GO:0005730">
    <property type="term" value="C:nucleolus"/>
    <property type="evidence" value="ECO:0000250"/>
    <property type="project" value="UniProtKB"/>
</dbReference>
<dbReference type="GO" id="GO:0005634">
    <property type="term" value="C:nucleus"/>
    <property type="evidence" value="ECO:0000250"/>
    <property type="project" value="UniProtKB"/>
</dbReference>
<dbReference type="GO" id="GO:0003723">
    <property type="term" value="F:RNA binding"/>
    <property type="evidence" value="ECO:0007669"/>
    <property type="project" value="UniProtKB-KW"/>
</dbReference>
<dbReference type="GO" id="GO:0009383">
    <property type="term" value="F:rRNA (cytosine-C5-)-methyltransferase activity"/>
    <property type="evidence" value="ECO:0000250"/>
    <property type="project" value="UniProtKB"/>
</dbReference>
<dbReference type="GO" id="GO:0001825">
    <property type="term" value="P:blastocyst formation"/>
    <property type="evidence" value="ECO:0000315"/>
    <property type="project" value="MGI"/>
</dbReference>
<dbReference type="GO" id="GO:1901796">
    <property type="term" value="P:regulation of signal transduction by p53 class mediator"/>
    <property type="evidence" value="ECO:0000250"/>
    <property type="project" value="UniProtKB"/>
</dbReference>
<dbReference type="GO" id="GO:0000027">
    <property type="term" value="P:ribosomal large subunit assembly"/>
    <property type="evidence" value="ECO:0000250"/>
    <property type="project" value="UniProtKB"/>
</dbReference>
<dbReference type="GO" id="GO:0042273">
    <property type="term" value="P:ribosomal large subunit biogenesis"/>
    <property type="evidence" value="ECO:0000250"/>
    <property type="project" value="UniProtKB"/>
</dbReference>
<dbReference type="GO" id="GO:0006364">
    <property type="term" value="P:rRNA processing"/>
    <property type="evidence" value="ECO:0000250"/>
    <property type="project" value="UniProtKB"/>
</dbReference>
<dbReference type="CDD" id="cd02440">
    <property type="entry name" value="AdoMet_MTases"/>
    <property type="match status" value="1"/>
</dbReference>
<dbReference type="FunFam" id="3.40.50.150:FF:000120">
    <property type="entry name" value="probable 28S rRNA (Cytosine(4447)-C(5))-methyltransferase"/>
    <property type="match status" value="1"/>
</dbReference>
<dbReference type="FunFam" id="3.30.70.1170:FF:000001">
    <property type="entry name" value="Ribosomal RNA methyltransferase Nop2"/>
    <property type="match status" value="1"/>
</dbReference>
<dbReference type="Gene3D" id="3.30.70.1170">
    <property type="entry name" value="Sun protein, domain 3"/>
    <property type="match status" value="1"/>
</dbReference>
<dbReference type="Gene3D" id="3.40.50.150">
    <property type="entry name" value="Vaccinia Virus protein VP39"/>
    <property type="match status" value="1"/>
</dbReference>
<dbReference type="InterPro" id="IPR049560">
    <property type="entry name" value="MeTrfase_RsmB-F_NOP2_cat"/>
</dbReference>
<dbReference type="InterPro" id="IPR001678">
    <property type="entry name" value="MeTrfase_RsmB-F_NOP2_dom"/>
</dbReference>
<dbReference type="InterPro" id="IPR012586">
    <property type="entry name" value="NOP2_rpt"/>
</dbReference>
<dbReference type="InterPro" id="IPR011023">
    <property type="entry name" value="Nop2p"/>
</dbReference>
<dbReference type="InterPro" id="IPR023267">
    <property type="entry name" value="RCMT"/>
</dbReference>
<dbReference type="InterPro" id="IPR023273">
    <property type="entry name" value="RCMT_NOP2"/>
</dbReference>
<dbReference type="InterPro" id="IPR054728">
    <property type="entry name" value="RsmB-like_ferredoxin"/>
</dbReference>
<dbReference type="InterPro" id="IPR018314">
    <property type="entry name" value="RsmB/NOL1/NOP2-like_CS"/>
</dbReference>
<dbReference type="InterPro" id="IPR029063">
    <property type="entry name" value="SAM-dependent_MTases_sf"/>
</dbReference>
<dbReference type="NCBIfam" id="TIGR00446">
    <property type="entry name" value="nop2p"/>
    <property type="match status" value="1"/>
</dbReference>
<dbReference type="PANTHER" id="PTHR22807:SF30">
    <property type="entry name" value="28S RRNA (CYTOSINE(4447)-C(5))-METHYLTRANSFERASE-RELATED"/>
    <property type="match status" value="1"/>
</dbReference>
<dbReference type="PANTHER" id="PTHR22807">
    <property type="entry name" value="NOP2 YEAST -RELATED NOL1/NOP2/FMU SUN DOMAIN-CONTAINING"/>
    <property type="match status" value="1"/>
</dbReference>
<dbReference type="Pfam" id="PF01189">
    <property type="entry name" value="Methyltr_RsmB-F"/>
    <property type="match status" value="1"/>
</dbReference>
<dbReference type="Pfam" id="PF08062">
    <property type="entry name" value="NOP2_rpt"/>
    <property type="match status" value="2"/>
</dbReference>
<dbReference type="Pfam" id="PF22458">
    <property type="entry name" value="RsmF-B_ferredox"/>
    <property type="match status" value="1"/>
</dbReference>
<dbReference type="PRINTS" id="PR02008">
    <property type="entry name" value="RCMTFAMILY"/>
</dbReference>
<dbReference type="PRINTS" id="PR02012">
    <property type="entry name" value="RCMTNOP2"/>
</dbReference>
<dbReference type="SUPFAM" id="SSF53335">
    <property type="entry name" value="S-adenosyl-L-methionine-dependent methyltransferases"/>
    <property type="match status" value="1"/>
</dbReference>
<dbReference type="PROSITE" id="PS01153">
    <property type="entry name" value="NOL1_NOP2_SUN"/>
    <property type="match status" value="1"/>
</dbReference>
<dbReference type="PROSITE" id="PS51686">
    <property type="entry name" value="SAM_MT_RSMB_NOP"/>
    <property type="match status" value="1"/>
</dbReference>
<accession>Q922K7</accession>
<accession>Q3U4W9</accession>
<name>NOP2_MOUSE</name>
<proteinExistence type="evidence at protein level"/>
<sequence>MGRKLDPTKKEKRGPGRKARKQKGAETELVRFLPAAGDENSKRLSSRARKRAAKRRAGSVDVPKPNKSPGIKTLPGELSKGAVQARGKKRPAPIQNSDGDEEEDSGEDDVVTQGDLWGSEDSDEDMVDDYGAASNSEDEEEKLLPIERAALKQKAQDATAGVLWNEEDTDEDEDDDGVSPESHPRKDDKAEGDLQINVEDEEAFVLPPAGETDQDGQAPDLQRVHKRIQDIVGVLRDFGAQREEGRSRAEYLSRLQKDLATYYSYGDFLLSKLMELFPLSELIEFLEANEVPRPITLRTNTLKTRRRDLAQLLINRGVNLDPLGKWSKSGLVVYDSSVPIGATPEYLAGHYMLQGASSMLPVMALAPQEHERILDMCCAPGGKTSYIAQLMKNTGVILANDANADRLKSVVGNLHRLGVTNTIISHYDGRQFPKVVGGFDRVLLDAPCSGTGVISKDPAVKTNKDEKDIQRCAHLQKELLLSAIDSVNAASKTGGYLVYCTCSITVEENEWVVDYALKKRNVRLVPTGLDFGQEGFTRFQARRFHPTLRSTRRFYPHTHNMDGFFIAKFKKFSNSIPQPHAGNSAAATPTEPDLKDQVTPKSENGSQPTKKARGAVKAKQQLLRQPHSKKPFQKLNGIAKGPGLSTEPSVPDAQVSTRPSQSAGNADVNSKRKRSEKLKQRGPKWKPSKEAAVPKPSAPSRVEDSGTPVPTPSEIRAAPRPKDCAPSLGKAKKKQKGKQQLAQQPANGAAPLKEDAVSKGPSAPFVSPHSSTRPPPAKRRKSMTKGNSQPLLS</sequence>
<evidence type="ECO:0000250" key="1">
    <source>
        <dbReference type="UniProtKB" id="P46087"/>
    </source>
</evidence>
<evidence type="ECO:0000255" key="2">
    <source>
        <dbReference type="PROSITE-ProRule" id="PRU01023"/>
    </source>
</evidence>
<evidence type="ECO:0000256" key="3">
    <source>
        <dbReference type="SAM" id="MobiDB-lite"/>
    </source>
</evidence>
<evidence type="ECO:0000269" key="4">
    <source>
    </source>
</evidence>
<evidence type="ECO:0000305" key="5"/>
<evidence type="ECO:0007744" key="6">
    <source>
    </source>
</evidence>
<organism>
    <name type="scientific">Mus musculus</name>
    <name type="common">Mouse</name>
    <dbReference type="NCBI Taxonomy" id="10090"/>
    <lineage>
        <taxon>Eukaryota</taxon>
        <taxon>Metazoa</taxon>
        <taxon>Chordata</taxon>
        <taxon>Craniata</taxon>
        <taxon>Vertebrata</taxon>
        <taxon>Euteleostomi</taxon>
        <taxon>Mammalia</taxon>
        <taxon>Eutheria</taxon>
        <taxon>Euarchontoglires</taxon>
        <taxon>Glires</taxon>
        <taxon>Rodentia</taxon>
        <taxon>Myomorpha</taxon>
        <taxon>Muroidea</taxon>
        <taxon>Muridae</taxon>
        <taxon>Murinae</taxon>
        <taxon>Mus</taxon>
        <taxon>Mus</taxon>
    </lineage>
</organism>